<accession>Q58390</accession>
<gene>
    <name type="ordered locus">MJ0981</name>
</gene>
<feature type="chain" id="PRO_0000107129" description="Uncharacterized protein MJ0981">
    <location>
        <begin position="1"/>
        <end position="204"/>
    </location>
</feature>
<dbReference type="EMBL" id="L77117">
    <property type="protein sequence ID" value="AAB98984.1"/>
    <property type="molecule type" value="Genomic_DNA"/>
</dbReference>
<dbReference type="PIR" id="E64422">
    <property type="entry name" value="E64422"/>
</dbReference>
<dbReference type="FunCoup" id="Q58390">
    <property type="interactions" value="3"/>
</dbReference>
<dbReference type="STRING" id="243232.MJ_0981"/>
<dbReference type="PaxDb" id="243232-MJ_0981"/>
<dbReference type="EnsemblBacteria" id="AAB98984">
    <property type="protein sequence ID" value="AAB98984"/>
    <property type="gene ID" value="MJ_0981"/>
</dbReference>
<dbReference type="KEGG" id="mja:MJ_0981"/>
<dbReference type="eggNOG" id="arCOG02680">
    <property type="taxonomic scope" value="Archaea"/>
</dbReference>
<dbReference type="HOGENOM" id="CLU_110112_1_0_2"/>
<dbReference type="InParanoid" id="Q58390"/>
<dbReference type="PhylomeDB" id="Q58390"/>
<dbReference type="Proteomes" id="UP000000805">
    <property type="component" value="Chromosome"/>
</dbReference>
<dbReference type="InterPro" id="IPR012041">
    <property type="entry name" value="Znf_CPxCG-like"/>
</dbReference>
<dbReference type="PANTHER" id="PTHR42195">
    <property type="entry name" value="UCP015877 FAMILY PROTEIN"/>
    <property type="match status" value="1"/>
</dbReference>
<dbReference type="PANTHER" id="PTHR42195:SF1">
    <property type="entry name" value="ZINC FINGER PROTEIN"/>
    <property type="match status" value="1"/>
</dbReference>
<dbReference type="Pfam" id="PF19769">
    <property type="entry name" value="CPxCG_zf"/>
    <property type="match status" value="1"/>
</dbReference>
<dbReference type="PIRSF" id="PIRSF015877">
    <property type="entry name" value="UCP015877"/>
    <property type="match status" value="1"/>
</dbReference>
<organism>
    <name type="scientific">Methanocaldococcus jannaschii (strain ATCC 43067 / DSM 2661 / JAL-1 / JCM 10045 / NBRC 100440)</name>
    <name type="common">Methanococcus jannaschii</name>
    <dbReference type="NCBI Taxonomy" id="243232"/>
    <lineage>
        <taxon>Archaea</taxon>
        <taxon>Methanobacteriati</taxon>
        <taxon>Methanobacteriota</taxon>
        <taxon>Methanomada group</taxon>
        <taxon>Methanococci</taxon>
        <taxon>Methanococcales</taxon>
        <taxon>Methanocaldococcaceae</taxon>
        <taxon>Methanocaldococcus</taxon>
    </lineage>
</organism>
<reference key="1">
    <citation type="journal article" date="1996" name="Science">
        <title>Complete genome sequence of the methanogenic archaeon, Methanococcus jannaschii.</title>
        <authorList>
            <person name="Bult C.J."/>
            <person name="White O."/>
            <person name="Olsen G.J."/>
            <person name="Zhou L."/>
            <person name="Fleischmann R.D."/>
            <person name="Sutton G.G."/>
            <person name="Blake J.A."/>
            <person name="FitzGerald L.M."/>
            <person name="Clayton R.A."/>
            <person name="Gocayne J.D."/>
            <person name="Kerlavage A.R."/>
            <person name="Dougherty B.A."/>
            <person name="Tomb J.-F."/>
            <person name="Adams M.D."/>
            <person name="Reich C.I."/>
            <person name="Overbeek R."/>
            <person name="Kirkness E.F."/>
            <person name="Weinstock K.G."/>
            <person name="Merrick J.M."/>
            <person name="Glodek A."/>
            <person name="Scott J.L."/>
            <person name="Geoghagen N.S.M."/>
            <person name="Weidman J.F."/>
            <person name="Fuhrmann J.L."/>
            <person name="Nguyen D."/>
            <person name="Utterback T.R."/>
            <person name="Kelley J.M."/>
            <person name="Peterson J.D."/>
            <person name="Sadow P.W."/>
            <person name="Hanna M.C."/>
            <person name="Cotton M.D."/>
            <person name="Roberts K.M."/>
            <person name="Hurst M.A."/>
            <person name="Kaine B.P."/>
            <person name="Borodovsky M."/>
            <person name="Klenk H.-P."/>
            <person name="Fraser C.M."/>
            <person name="Smith H.O."/>
            <person name="Woese C.R."/>
            <person name="Venter J.C."/>
        </authorList>
    </citation>
    <scope>NUCLEOTIDE SEQUENCE [LARGE SCALE GENOMIC DNA]</scope>
    <source>
        <strain>ATCC 43067 / DSM 2661 / JAL-1 / JCM 10045 / NBRC 100440</strain>
    </source>
</reference>
<keyword id="KW-1185">Reference proteome</keyword>
<proteinExistence type="predicted"/>
<sequence>MEMTEKIYLKCENCGFEEQEVLKKKIYNKSAYYLVRCPNCGSVREIVDKVKLSQAKLIISRYDISESKVINIPEDETYKVGDTIEIDGEKIEITKIETPESVKSALGEDIKVIWGKSLSIPKKLGISINDRSKTYGIYIYVPNDFEFEVEKVYRINDGFFRLKKIKTEKGTAKKAKAKDIKRLYGDVTRPVRNYVDLSEFYKGE</sequence>
<protein>
    <recommendedName>
        <fullName>Uncharacterized protein MJ0981</fullName>
    </recommendedName>
</protein>
<name>Y981_METJA</name>